<reference key="1">
    <citation type="journal article" date="2007" name="BMC Biol.">
        <title>A clade uniting the green algae Mesostigma viride and Chlorokybus atmophyticus represents the deepest branch of the Streptophyta in chloroplast genome-based phylogenies.</title>
        <authorList>
            <person name="Lemieux C."/>
            <person name="Otis C."/>
            <person name="Turmel M."/>
        </authorList>
    </citation>
    <scope>NUCLEOTIDE SEQUENCE [LARGE SCALE GENOMIC DNA]</scope>
    <source>
        <strain>SAG 48.80</strain>
    </source>
</reference>
<geneLocation type="chloroplast"/>
<evidence type="ECO:0000255" key="1">
    <source>
        <dbReference type="HAMAP-Rule" id="MF_01308"/>
    </source>
</evidence>
<evidence type="ECO:0000305" key="2"/>
<sequence length="236" mass="27476">MTRNWKVSKYQTVTSIKYFISFILFVLITNHVSSRILLRPCAEYLWNMRQTDIFINSSQEERAFLELQRFEDKTRFEILIGEAPQLNTQSFNKKIQEKAIELAKYSNEESIDSIANVFADLLSLCIFVLALLLGKKEIAVIKNLVNTLIYSLTDATKSFFIILFTDIFVGFHSSHGWEILIEVFLKHLGLPENKDFIFLFVATFPVVLDTVFKYWIFLYLNKISPSAVATFHNMNE</sequence>
<organism>
    <name type="scientific">Chlorokybus atmophyticus</name>
    <name type="common">Soil alga</name>
    <dbReference type="NCBI Taxonomy" id="3144"/>
    <lineage>
        <taxon>Eukaryota</taxon>
        <taxon>Viridiplantae</taxon>
        <taxon>Streptophyta</taxon>
        <taxon>Chlorokybophyceae</taxon>
        <taxon>Chlorokybales</taxon>
        <taxon>Chlorokybaceae</taxon>
        <taxon>Chlorokybus</taxon>
    </lineage>
</organism>
<name>CEMA_CHLAT</name>
<dbReference type="EMBL" id="DQ422812">
    <property type="protein sequence ID" value="ABD62176.2"/>
    <property type="molecule type" value="Genomic_DNA"/>
</dbReference>
<dbReference type="RefSeq" id="YP_001019143.1">
    <property type="nucleotide sequence ID" value="NC_008822.1"/>
</dbReference>
<dbReference type="SMR" id="Q19V69"/>
<dbReference type="GeneID" id="4783202"/>
<dbReference type="GO" id="GO:0009706">
    <property type="term" value="C:chloroplast inner membrane"/>
    <property type="evidence" value="ECO:0007669"/>
    <property type="project" value="UniProtKB-SubCell"/>
</dbReference>
<dbReference type="GO" id="GO:0015297">
    <property type="term" value="F:antiporter activity"/>
    <property type="evidence" value="ECO:0007669"/>
    <property type="project" value="UniProtKB-KW"/>
</dbReference>
<dbReference type="GO" id="GO:0015078">
    <property type="term" value="F:proton transmembrane transporter activity"/>
    <property type="evidence" value="ECO:0007669"/>
    <property type="project" value="UniProtKB-UniRule"/>
</dbReference>
<dbReference type="GO" id="GO:0006813">
    <property type="term" value="P:potassium ion transport"/>
    <property type="evidence" value="ECO:0007669"/>
    <property type="project" value="UniProtKB-UniRule"/>
</dbReference>
<dbReference type="HAMAP" id="MF_01308">
    <property type="entry name" value="CemA_PxcA"/>
    <property type="match status" value="1"/>
</dbReference>
<dbReference type="InterPro" id="IPR004282">
    <property type="entry name" value="CemA"/>
</dbReference>
<dbReference type="PANTHER" id="PTHR33650:SF2">
    <property type="entry name" value="CHLOROPLAST ENVELOPE MEMBRANE PROTEIN"/>
    <property type="match status" value="1"/>
</dbReference>
<dbReference type="PANTHER" id="PTHR33650">
    <property type="entry name" value="CHLOROPLAST ENVELOPE MEMBRANE PROTEIN-RELATED"/>
    <property type="match status" value="1"/>
</dbReference>
<dbReference type="Pfam" id="PF03040">
    <property type="entry name" value="CemA"/>
    <property type="match status" value="1"/>
</dbReference>
<proteinExistence type="inferred from homology"/>
<keyword id="KW-0050">Antiport</keyword>
<keyword id="KW-0150">Chloroplast</keyword>
<keyword id="KW-0375">Hydrogen ion transport</keyword>
<keyword id="KW-0406">Ion transport</keyword>
<keyword id="KW-0472">Membrane</keyword>
<keyword id="KW-0934">Plastid</keyword>
<keyword id="KW-1001">Plastid inner membrane</keyword>
<keyword id="KW-0630">Potassium</keyword>
<keyword id="KW-0633">Potassium transport</keyword>
<keyword id="KW-0812">Transmembrane</keyword>
<keyword id="KW-1133">Transmembrane helix</keyword>
<keyword id="KW-0813">Transport</keyword>
<accession>Q19V69</accession>
<gene>
    <name evidence="1" type="primary">cemA</name>
</gene>
<feature type="chain" id="PRO_0000293514" description="Potassium/proton antiporter CemA">
    <location>
        <begin position="1"/>
        <end position="236"/>
    </location>
</feature>
<feature type="transmembrane region" description="Helical" evidence="1">
    <location>
        <begin position="12"/>
        <end position="32"/>
    </location>
</feature>
<feature type="transmembrane region" description="Helical" evidence="1">
    <location>
        <begin position="114"/>
        <end position="134"/>
    </location>
</feature>
<feature type="transmembrane region" description="Helical" evidence="1">
    <location>
        <begin position="161"/>
        <end position="181"/>
    </location>
</feature>
<feature type="transmembrane region" description="Helical" evidence="1">
    <location>
        <begin position="196"/>
        <end position="216"/>
    </location>
</feature>
<comment type="function">
    <text evidence="1">Contributes to K(+)/H(+) antiport activity by supporting proton efflux to control proton extrusion and homeostasis in chloroplasts in a light-dependent manner to modulate photosynthesis. Prevents excessive induction of non-photochemical quenching (NPQ) under continuous-light conditions. Indirectly promotes efficient inorganic carbon uptake into chloroplasts.</text>
</comment>
<comment type="catalytic activity">
    <reaction evidence="1">
        <text>K(+)(in) + H(+)(out) = K(+)(out) + H(+)(in)</text>
        <dbReference type="Rhea" id="RHEA:29467"/>
        <dbReference type="ChEBI" id="CHEBI:15378"/>
        <dbReference type="ChEBI" id="CHEBI:29103"/>
    </reaction>
</comment>
<comment type="subcellular location">
    <subcellularLocation>
        <location evidence="1">Plastid</location>
        <location evidence="1">Chloroplast inner membrane</location>
        <topology evidence="1">Multi-pass membrane protein</topology>
    </subcellularLocation>
</comment>
<comment type="similarity">
    <text evidence="1 2">Belongs to the CemA family.</text>
</comment>
<protein>
    <recommendedName>
        <fullName evidence="1">Potassium/proton antiporter CemA</fullName>
    </recommendedName>
    <alternativeName>
        <fullName evidence="1">Chloroplast envelope membrane protein A</fullName>
        <shortName evidence="1">CemA</shortName>
    </alternativeName>
</protein>